<comment type="function">
    <text>In the hair cortex, hair keratin intermediate filaments are embedded in an interfilamentous matrix, consisting of hair keratin-associated proteins (KRTAP), which are essential for the formation of a rigid and resistant hair shaft through their extensive disulfide bond cross-linking with abundant cysteine residues of hair keratins. The matrix proteins include the high-sulfur and high-glycine-tyrosine keratins.</text>
</comment>
<comment type="subunit">
    <text>Interacts with hair keratins.</text>
</comment>
<comment type="interaction">
    <interactant intactId="EBI-11953334">
        <id>P60328</id>
    </interactant>
    <interactant intactId="EBI-10221726">
        <id>P82987</id>
        <label>ADAMTSL3</label>
    </interactant>
    <organismsDiffer>false</organismsDiffer>
    <experiments>3</experiments>
</comment>
<comment type="interaction">
    <interactant intactId="EBI-11953334">
        <id>P60328</id>
    </interactant>
    <interactant intactId="EBI-10173507">
        <id>Q6UY14-3</id>
        <label>ADAMTSL4</label>
    </interactant>
    <organismsDiffer>false</organismsDiffer>
    <experiments>3</experiments>
</comment>
<comment type="interaction">
    <interactant intactId="EBI-11953334">
        <id>P60328</id>
    </interactant>
    <interactant intactId="EBI-727098">
        <id>P21549</id>
        <label>AGXT</label>
    </interactant>
    <organismsDiffer>false</organismsDiffer>
    <experiments>3</experiments>
</comment>
<comment type="interaction">
    <interactant intactId="EBI-11953334">
        <id>P60328</id>
    </interactant>
    <interactant intactId="EBI-2558314">
        <id>P43353</id>
        <label>ALDH3B1</label>
    </interactant>
    <organismsDiffer>false</organismsDiffer>
    <experiments>3</experiments>
</comment>
<comment type="interaction">
    <interactant intactId="EBI-11953334">
        <id>P60328</id>
    </interactant>
    <interactant intactId="EBI-10174813">
        <id>A8KA13</id>
        <label>BCL6B</label>
    </interactant>
    <organismsDiffer>false</organismsDiffer>
    <experiments>3</experiments>
</comment>
<comment type="interaction">
    <interactant intactId="EBI-11953334">
        <id>P60328</id>
    </interactant>
    <interactant intactId="EBI-1035195">
        <id>P18075</id>
        <label>BMP7</label>
    </interactant>
    <organismsDiffer>false</organismsDiffer>
    <experiments>3</experiments>
</comment>
<comment type="interaction">
    <interactant intactId="EBI-11953334">
        <id>P60328</id>
    </interactant>
    <interactant intactId="EBI-6660291">
        <id>Q6NUJ2</id>
        <label>C11orf87</label>
    </interactant>
    <organismsDiffer>false</organismsDiffer>
    <experiments>3</experiments>
</comment>
<comment type="interaction">
    <interactant intactId="EBI-11953334">
        <id>P60328</id>
    </interactant>
    <interactant intactId="EBI-7317823">
        <id>Q6P5X5</id>
        <label>C22orf39</label>
    </interactant>
    <organismsDiffer>false</organismsDiffer>
    <experiments>3</experiments>
</comment>
<comment type="interaction">
    <interactant intactId="EBI-11953334">
        <id>P60328</id>
    </interactant>
    <interactant intactId="EBI-3866279">
        <id>Q9BWT7</id>
        <label>CARD10</label>
    </interactant>
    <organismsDiffer>false</organismsDiffer>
    <experiments>3</experiments>
</comment>
<comment type="interaction">
    <interactant intactId="EBI-11953334">
        <id>P60328</id>
    </interactant>
    <interactant intactId="EBI-744545">
        <id>Q8NEC5</id>
        <label>CATSPER1</label>
    </interactant>
    <organismsDiffer>false</organismsDiffer>
    <experiments>3</experiments>
</comment>
<comment type="interaction">
    <interactant intactId="EBI-11953334">
        <id>P60328</id>
    </interactant>
    <interactant intactId="EBI-11974585">
        <id>Q14781-2</id>
        <label>CBX2</label>
    </interactant>
    <organismsDiffer>false</organismsDiffer>
    <experiments>3</experiments>
</comment>
<comment type="interaction">
    <interactant intactId="EBI-11953334">
        <id>P60328</id>
    </interactant>
    <interactant intactId="EBI-12139335">
        <id>Q8N6W0</id>
        <label>CELF5</label>
    </interactant>
    <organismsDiffer>false</organismsDiffer>
    <experiments>3</experiments>
</comment>
<comment type="interaction">
    <interactant intactId="EBI-11953334">
        <id>P60328</id>
    </interactant>
    <interactant intactId="EBI-741528">
        <id>Q9UKJ5</id>
        <label>CHIC2</label>
    </interactant>
    <organismsDiffer>false</organismsDiffer>
    <experiments>3</experiments>
</comment>
<comment type="interaction">
    <interactant intactId="EBI-11953334">
        <id>P60328</id>
    </interactant>
    <interactant intactId="EBI-947551">
        <id>Q9H2X0</id>
        <label>CHRD</label>
    </interactant>
    <organismsDiffer>false</organismsDiffer>
    <experiments>3</experiments>
</comment>
<comment type="interaction">
    <interactant intactId="EBI-11953334">
        <id>P60328</id>
    </interactant>
    <interactant intactId="EBI-11979451">
        <id>P07510-2</id>
        <label>CHRNG</label>
    </interactant>
    <organismsDiffer>false</organismsDiffer>
    <experiments>3</experiments>
</comment>
<comment type="interaction">
    <interactant intactId="EBI-11953334">
        <id>P60328</id>
    </interactant>
    <interactant intactId="EBI-741032">
        <id>Q8NE01</id>
        <label>CNNM3</label>
    </interactant>
    <organismsDiffer>false</organismsDiffer>
    <experiments>3</experiments>
</comment>
<comment type="interaction">
    <interactant intactId="EBI-11953334">
        <id>P60328</id>
    </interactant>
    <interactant intactId="EBI-747133">
        <id>P27658</id>
        <label>COL8A1</label>
    </interactant>
    <organismsDiffer>false</organismsDiffer>
    <experiments>3</experiments>
</comment>
<comment type="interaction">
    <interactant intactId="EBI-11953334">
        <id>P60328</id>
    </interactant>
    <interactant intactId="EBI-713677">
        <id>Q9UGL9</id>
        <label>CRCT1</label>
    </interactant>
    <organismsDiffer>false</organismsDiffer>
    <experiments>3</experiments>
</comment>
<comment type="interaction">
    <interactant intactId="EBI-11953334">
        <id>P60328</id>
    </interactant>
    <interactant intactId="EBI-10192698">
        <id>Q02930-3</id>
        <label>CREB5</label>
    </interactant>
    <organismsDiffer>false</organismsDiffer>
    <experiments>3</experiments>
</comment>
<comment type="interaction">
    <interactant intactId="EBI-11953334">
        <id>P60328</id>
    </interactant>
    <interactant intactId="EBI-3867333">
        <id>A8MQ03</id>
        <label>CYSRT1</label>
    </interactant>
    <organismsDiffer>false</organismsDiffer>
    <experiments>3</experiments>
</comment>
<comment type="interaction">
    <interactant intactId="EBI-11953334">
        <id>P60328</id>
    </interactant>
    <interactant intactId="EBI-9090939">
        <id>Q5D0E6-2</id>
        <label>DALRD3</label>
    </interactant>
    <organismsDiffer>false</organismsDiffer>
    <experiments>3</experiments>
</comment>
<comment type="interaction">
    <interactant intactId="EBI-11953334">
        <id>P60328</id>
    </interactant>
    <interactant intactId="EBI-746300">
        <id>Q96LJ7</id>
        <label>DHRS1</label>
    </interactant>
    <organismsDiffer>false</organismsDiffer>
    <experiments>3</experiments>
</comment>
<comment type="interaction">
    <interactant intactId="EBI-11953334">
        <id>P60328</id>
    </interactant>
    <interactant intactId="EBI-1051531">
        <id>Q6P158</id>
        <label>DHX57</label>
    </interactant>
    <organismsDiffer>false</organismsDiffer>
    <experiments>3</experiments>
</comment>
<comment type="interaction">
    <interactant intactId="EBI-11953334">
        <id>P60328</id>
    </interactant>
    <interactant intactId="EBI-742362">
        <id>O96015</id>
        <label>DNAL4</label>
    </interactant>
    <organismsDiffer>false</organismsDiffer>
    <experiments>3</experiments>
</comment>
<comment type="interaction">
    <interactant intactId="EBI-11953334">
        <id>P60328</id>
    </interactant>
    <interactant intactId="EBI-448771">
        <id>Q92608</id>
        <label>DOCK2</label>
    </interactant>
    <organismsDiffer>false</organismsDiffer>
    <experiments>3</experiments>
</comment>
<comment type="interaction">
    <interactant intactId="EBI-11953334">
        <id>P60328</id>
    </interactant>
    <interactant intactId="EBI-495538">
        <id>P48023</id>
        <label>FASLG</label>
    </interactant>
    <organismsDiffer>false</organismsDiffer>
    <experiments>3</experiments>
</comment>
<comment type="interaction">
    <interactant intactId="EBI-11953334">
        <id>P60328</id>
    </interactant>
    <interactant intactId="EBI-741068">
        <id>Q969U6</id>
        <label>FBXW5</label>
    </interactant>
    <organismsDiffer>false</organismsDiffer>
    <experiments>3</experiments>
</comment>
<comment type="interaction">
    <interactant intactId="EBI-11953334">
        <id>P60328</id>
    </interactant>
    <interactant intactId="EBI-374781">
        <id>O76003</id>
        <label>GLRX3</label>
    </interactant>
    <organismsDiffer>false</organismsDiffer>
    <experiments>3</experiments>
</comment>
<comment type="interaction">
    <interactant intactId="EBI-11953334">
        <id>P60328</id>
    </interactant>
    <interactant intactId="EBI-11975289">
        <id>Q9Y223-2</id>
        <label>GNE</label>
    </interactant>
    <organismsDiffer>false</organismsDiffer>
    <experiments>3</experiments>
</comment>
<comment type="interaction">
    <interactant intactId="EBI-11953334">
        <id>P60328</id>
    </interactant>
    <interactant intactId="EBI-1045409">
        <id>Q9Y5Q8</id>
        <label>GTF3C5</label>
    </interactant>
    <organismsDiffer>false</organismsDiffer>
    <experiments>3</experiments>
</comment>
<comment type="interaction">
    <interactant intactId="EBI-11953334">
        <id>P60328</id>
    </interactant>
    <interactant intactId="EBI-740785">
        <id>P49639</id>
        <label>HOXA1</label>
    </interactant>
    <organismsDiffer>false</organismsDiffer>
    <experiments>6</experiments>
</comment>
<comment type="interaction">
    <interactant intactId="EBI-11953334">
        <id>P60328</id>
    </interactant>
    <interactant intactId="EBI-11051601">
        <id>P16144-2</id>
        <label>ITGB4</label>
    </interactant>
    <organismsDiffer>false</organismsDiffer>
    <experiments>3</experiments>
</comment>
<comment type="interaction">
    <interactant intactId="EBI-11953334">
        <id>P60328</id>
    </interactant>
    <interactant intactId="EBI-2510602">
        <id>Q15040</id>
        <label>JOSD1</label>
    </interactant>
    <organismsDiffer>false</organismsDiffer>
    <experiments>3</experiments>
</comment>
<comment type="interaction">
    <interactant intactId="EBI-11953334">
        <id>P60328</id>
    </interactant>
    <interactant intactId="EBI-10981970">
        <id>Q5T749</id>
        <label>KPRP</label>
    </interactant>
    <organismsDiffer>false</organismsDiffer>
    <experiments>6</experiments>
</comment>
<comment type="interaction">
    <interactant intactId="EBI-11953334">
        <id>P60328</id>
    </interactant>
    <interactant intactId="EBI-742094">
        <id>P35900</id>
        <label>KRT20</label>
    </interactant>
    <organismsDiffer>false</organismsDiffer>
    <experiments>3</experiments>
</comment>
<comment type="interaction">
    <interactant intactId="EBI-11953334">
        <id>P60328</id>
    </interactant>
    <interactant intactId="EBI-11959885">
        <id>Q07627</id>
        <label>KRTAP1-1</label>
    </interactant>
    <organismsDiffer>false</organismsDiffer>
    <experiments>3</experiments>
</comment>
<comment type="interaction">
    <interactant intactId="EBI-11953334">
        <id>P60328</id>
    </interactant>
    <interactant intactId="EBI-10172290">
        <id>P60409</id>
        <label>KRTAP10-7</label>
    </interactant>
    <organismsDiffer>false</organismsDiffer>
    <experiments>3</experiments>
</comment>
<comment type="interaction">
    <interactant intactId="EBI-11953334">
        <id>P60328</id>
    </interactant>
    <interactant intactId="EBI-10171774">
        <id>P60410</id>
        <label>KRTAP10-8</label>
    </interactant>
    <organismsDiffer>false</organismsDiffer>
    <experiments>3</experiments>
</comment>
<comment type="interaction">
    <interactant intactId="EBI-11953334">
        <id>P60328</id>
    </interactant>
    <interactant intactId="EBI-10172052">
        <id>P60411</id>
        <label>KRTAP10-9</label>
    </interactant>
    <organismsDiffer>false</organismsDiffer>
    <experiments>3</experiments>
</comment>
<comment type="interaction">
    <interactant intactId="EBI-11953334">
        <id>P60328</id>
    </interactant>
    <interactant intactId="EBI-1052037">
        <id>Q8IUC1</id>
        <label>KRTAP11-1</label>
    </interactant>
    <organismsDiffer>false</organismsDiffer>
    <experiments>3</experiments>
</comment>
<comment type="interaction">
    <interactant intactId="EBI-11953334">
        <id>P60328</id>
    </interactant>
    <interactant intactId="EBI-10210845">
        <id>P59990</id>
        <label>KRTAP12-1</label>
    </interactant>
    <organismsDiffer>false</organismsDiffer>
    <experiments>6</experiments>
</comment>
<comment type="interaction">
    <interactant intactId="EBI-11953334">
        <id>P60328</id>
    </interactant>
    <interactant intactId="EBI-11953334">
        <id>P60328</id>
        <label>KRTAP12-3</label>
    </interactant>
    <organismsDiffer>false</organismsDiffer>
    <experiments>3</experiments>
</comment>
<comment type="interaction">
    <interactant intactId="EBI-11953334">
        <id>P60328</id>
    </interactant>
    <interactant intactId="EBI-11953846">
        <id>Q52LG2</id>
        <label>KRTAP13-2</label>
    </interactant>
    <organismsDiffer>false</organismsDiffer>
    <experiments>3</experiments>
</comment>
<comment type="interaction">
    <interactant intactId="EBI-11953334">
        <id>P60328</id>
    </interactant>
    <interactant intactId="EBI-10241252">
        <id>Q3SY46</id>
        <label>KRTAP13-3</label>
    </interactant>
    <organismsDiffer>false</organismsDiffer>
    <experiments>3</experiments>
</comment>
<comment type="interaction">
    <interactant intactId="EBI-11953334">
        <id>P60328</id>
    </interactant>
    <interactant intactId="EBI-10241353">
        <id>Q3SYF9</id>
        <label>KRTAP19-7</label>
    </interactant>
    <organismsDiffer>false</organismsDiffer>
    <experiments>3</experiments>
</comment>
<comment type="interaction">
    <interactant intactId="EBI-11953334">
        <id>P60328</id>
    </interactant>
    <interactant intactId="EBI-3957694">
        <id>Q9BYR6</id>
        <label>KRTAP3-3</label>
    </interactant>
    <organismsDiffer>false</organismsDiffer>
    <experiments>3</experiments>
</comment>
<comment type="interaction">
    <interactant intactId="EBI-11953334">
        <id>P60328</id>
    </interactant>
    <interactant intactId="EBI-10172511">
        <id>Q9BYR5</id>
        <label>KRTAP4-2</label>
    </interactant>
    <organismsDiffer>false</organismsDiffer>
    <experiments>3</experiments>
</comment>
<comment type="interaction">
    <interactant intactId="EBI-11953334">
        <id>P60328</id>
    </interactant>
    <interactant intactId="EBI-11958132">
        <id>Q9BYR3</id>
        <label>KRTAP4-4</label>
    </interactant>
    <organismsDiffer>false</organismsDiffer>
    <experiments>3</experiments>
</comment>
<comment type="interaction">
    <interactant intactId="EBI-11953334">
        <id>P60328</id>
    </interactant>
    <interactant intactId="EBI-10250562">
        <id>Q6L8G9</id>
        <label>KRTAP5-6</label>
    </interactant>
    <organismsDiffer>false</organismsDiffer>
    <experiments>3</experiments>
</comment>
<comment type="interaction">
    <interactant intactId="EBI-11953334">
        <id>P60328</id>
    </interactant>
    <interactant intactId="EBI-3958099">
        <id>P26371</id>
        <label>KRTAP5-9</label>
    </interactant>
    <organismsDiffer>false</organismsDiffer>
    <experiments>3</experiments>
</comment>
<comment type="interaction">
    <interactant intactId="EBI-11953334">
        <id>P60328</id>
    </interactant>
    <interactant intactId="EBI-12111050">
        <id>Q3LI64</id>
        <label>KRTAP6-1</label>
    </interactant>
    <organismsDiffer>false</organismsDiffer>
    <experiments>3</experiments>
</comment>
<comment type="interaction">
    <interactant intactId="EBI-11953334">
        <id>P60328</id>
    </interactant>
    <interactant intactId="EBI-11962084">
        <id>Q3LI66</id>
        <label>KRTAP6-2</label>
    </interactant>
    <organismsDiffer>false</organismsDiffer>
    <experiments>3</experiments>
</comment>
<comment type="interaction">
    <interactant intactId="EBI-11953334">
        <id>P60328</id>
    </interactant>
    <interactant intactId="EBI-1044640">
        <id>Q9BYQ4</id>
        <label>KRTAP9-2</label>
    </interactant>
    <organismsDiffer>false</organismsDiffer>
    <experiments>3</experiments>
</comment>
<comment type="interaction">
    <interactant intactId="EBI-11953334">
        <id>P60328</id>
    </interactant>
    <interactant intactId="EBI-11962058">
        <id>Q5T7P2</id>
        <label>LCE1A</label>
    </interactant>
    <organismsDiffer>false</organismsDiffer>
    <experiments>6</experiments>
</comment>
<comment type="interaction">
    <interactant intactId="EBI-11953334">
        <id>P60328</id>
    </interactant>
    <interactant intactId="EBI-10245913">
        <id>Q5T7P3</id>
        <label>LCE1B</label>
    </interactant>
    <organismsDiffer>false</organismsDiffer>
    <experiments>4</experiments>
</comment>
<comment type="interaction">
    <interactant intactId="EBI-11953334">
        <id>P60328</id>
    </interactant>
    <interactant intactId="EBI-12224199">
        <id>Q5T751</id>
        <label>LCE1C</label>
    </interactant>
    <organismsDiffer>false</organismsDiffer>
    <experiments>3</experiments>
</comment>
<comment type="interaction">
    <interactant intactId="EBI-11953334">
        <id>P60328</id>
    </interactant>
    <interactant intactId="EBI-11955335">
        <id>Q5T753</id>
        <label>LCE1E</label>
    </interactant>
    <organismsDiffer>false</organismsDiffer>
    <experiments>3</experiments>
</comment>
<comment type="interaction">
    <interactant intactId="EBI-11953334">
        <id>P60328</id>
    </interactant>
    <interactant intactId="EBI-11958008">
        <id>Q5T754</id>
        <label>LCE1F</label>
    </interactant>
    <organismsDiffer>false</organismsDiffer>
    <experiments>7</experiments>
</comment>
<comment type="interaction">
    <interactant intactId="EBI-11953334">
        <id>P60328</id>
    </interactant>
    <interactant intactId="EBI-10246607">
        <id>Q5TA79</id>
        <label>LCE2A</label>
    </interactant>
    <organismsDiffer>false</organismsDiffer>
    <experiments>3</experiments>
</comment>
<comment type="interaction">
    <interactant intactId="EBI-11953334">
        <id>P60328</id>
    </interactant>
    <interactant intactId="EBI-11478468">
        <id>O14633</id>
        <label>LCE2B</label>
    </interactant>
    <organismsDiffer>false</organismsDiffer>
    <experiments>6</experiments>
</comment>
<comment type="interaction">
    <interactant intactId="EBI-11953334">
        <id>P60328</id>
    </interactant>
    <interactant intactId="EBI-11973993">
        <id>Q5TA81</id>
        <label>LCE2C</label>
    </interactant>
    <organismsDiffer>false</organismsDiffer>
    <experiments>3</experiments>
</comment>
<comment type="interaction">
    <interactant intactId="EBI-11953334">
        <id>P60328</id>
    </interactant>
    <interactant intactId="EBI-10246750">
        <id>Q5TA82</id>
        <label>LCE2D</label>
    </interactant>
    <organismsDiffer>false</organismsDiffer>
    <experiments>3</experiments>
</comment>
<comment type="interaction">
    <interactant intactId="EBI-11953334">
        <id>P60328</id>
    </interactant>
    <interactant intactId="EBI-9394625">
        <id>Q5TA76</id>
        <label>LCE3A</label>
    </interactant>
    <organismsDiffer>false</organismsDiffer>
    <experiments>6</experiments>
</comment>
<comment type="interaction">
    <interactant intactId="EBI-11953334">
        <id>P60328</id>
    </interactant>
    <interactant intactId="EBI-10245291">
        <id>Q5T5A8</id>
        <label>LCE3C</label>
    </interactant>
    <organismsDiffer>false</organismsDiffer>
    <experiments>6</experiments>
</comment>
<comment type="interaction">
    <interactant intactId="EBI-11953334">
        <id>P60328</id>
    </interactant>
    <interactant intactId="EBI-6658837">
        <id>Q9BYE3</id>
        <label>LCE3D</label>
    </interactant>
    <organismsDiffer>false</organismsDiffer>
    <experiments>3</experiments>
</comment>
<comment type="interaction">
    <interactant intactId="EBI-11953334">
        <id>P60328</id>
    </interactant>
    <interactant intactId="EBI-10245456">
        <id>Q5T5B0</id>
        <label>LCE3E</label>
    </interactant>
    <organismsDiffer>false</organismsDiffer>
    <experiments>3</experiments>
</comment>
<comment type="interaction">
    <interactant intactId="EBI-11953334">
        <id>P60328</id>
    </interactant>
    <interactant intactId="EBI-10246358">
        <id>Q5TA78</id>
        <label>LCE4A</label>
    </interactant>
    <organismsDiffer>false</organismsDiffer>
    <experiments>6</experiments>
</comment>
<comment type="interaction">
    <interactant intactId="EBI-11953334">
        <id>P60328</id>
    </interactant>
    <interactant intactId="EBI-11955689">
        <id>Q5TCM9</id>
        <label>LCE5A</label>
    </interactant>
    <organismsDiffer>false</organismsDiffer>
    <experiments>3</experiments>
</comment>
<comment type="interaction">
    <interactant intactId="EBI-11953334">
        <id>P60328</id>
    </interactant>
    <interactant intactId="EBI-1037189">
        <id>P15018</id>
        <label>LIF</label>
    </interactant>
    <organismsDiffer>false</organismsDiffer>
    <experiments>3</experiments>
</comment>
<comment type="interaction">
    <interactant intactId="EBI-11953334">
        <id>P60328</id>
    </interactant>
    <interactant intactId="EBI-12028858">
        <id>Q8IXW0</id>
        <label>LMNTD2</label>
    </interactant>
    <organismsDiffer>false</organismsDiffer>
    <experiments>3</experiments>
</comment>
<comment type="interaction">
    <interactant intactId="EBI-11953334">
        <id>P60328</id>
    </interactant>
    <interactant intactId="EBI-739832">
        <id>Q8TBB1</id>
        <label>LNX1</label>
    </interactant>
    <organismsDiffer>false</organismsDiffer>
    <experiments>3</experiments>
</comment>
<comment type="interaction">
    <interactant intactId="EBI-11953334">
        <id>P60328</id>
    </interactant>
    <interactant intactId="EBI-10329546">
        <id>Q9Y5Y7</id>
        <label>LYVE1</label>
    </interactant>
    <organismsDiffer>false</organismsDiffer>
    <experiments>3</experiments>
</comment>
<comment type="interaction">
    <interactant intactId="EBI-11953334">
        <id>P60328</id>
    </interactant>
    <interactant intactId="EBI-947402">
        <id>O60336</id>
        <label>MAPKBP1</label>
    </interactant>
    <organismsDiffer>false</organismsDiffer>
    <experiments>3</experiments>
</comment>
<comment type="interaction">
    <interactant intactId="EBI-11953334">
        <id>P60328</id>
    </interactant>
    <interactant intactId="EBI-16439278">
        <id>Q6FHY5</id>
        <label>MEOX2</label>
    </interactant>
    <organismsDiffer>false</organismsDiffer>
    <experiments>3</experiments>
</comment>
<comment type="interaction">
    <interactant intactId="EBI-11953334">
        <id>P60328</id>
    </interactant>
    <interactant intactId="EBI-2555085">
        <id>Q8IVT2</id>
        <label>MISP</label>
    </interactant>
    <organismsDiffer>false</organismsDiffer>
    <experiments>3</experiments>
</comment>
<comment type="interaction">
    <interactant intactId="EBI-11953334">
        <id>P60328</id>
    </interactant>
    <interactant intactId="EBI-12013470">
        <id>Q13875-3</id>
        <label>MOBP</label>
    </interactant>
    <organismsDiffer>false</organismsDiffer>
    <experiments>3</experiments>
</comment>
<comment type="interaction">
    <interactant intactId="EBI-11953334">
        <id>P60328</id>
    </interactant>
    <interactant intactId="EBI-1538217">
        <id>Q969G9</id>
        <label>NKD1</label>
    </interactant>
    <organismsDiffer>false</organismsDiffer>
    <experiments>3</experiments>
</comment>
<comment type="interaction">
    <interactant intactId="EBI-11953334">
        <id>P60328</id>
    </interactant>
    <interactant intactId="EBI-10210351">
        <id>P48645</id>
        <label>NMU</label>
    </interactant>
    <organismsDiffer>false</organismsDiffer>
    <experiments>3</experiments>
</comment>
<comment type="interaction">
    <interactant intactId="EBI-11953334">
        <id>P60328</id>
    </interactant>
    <interactant intactId="EBI-22310682">
        <id>P0DPK4</id>
        <label>NOTCH2NLC</label>
    </interactant>
    <organismsDiffer>false</organismsDiffer>
    <experiments>3</experiments>
</comment>
<comment type="interaction">
    <interactant intactId="EBI-11953334">
        <id>P60328</id>
    </interactant>
    <interactant intactId="EBI-748927">
        <id>Q9NQX5</id>
        <label>NPDC1</label>
    </interactant>
    <organismsDiffer>false</organismsDiffer>
    <experiments>3</experiments>
</comment>
<comment type="interaction">
    <interactant intactId="EBI-11953334">
        <id>P60328</id>
    </interactant>
    <interactant intactId="EBI-10250949">
        <id>Q6NSM0</id>
        <label>NR1D2</label>
    </interactant>
    <organismsDiffer>false</organismsDiffer>
    <experiments>6</experiments>
</comment>
<comment type="interaction">
    <interactant intactId="EBI-11953334">
        <id>P60328</id>
    </interactant>
    <interactant intactId="EBI-13644623">
        <id>Q92570</id>
        <label>NR4A3</label>
    </interactant>
    <organismsDiffer>false</organismsDiffer>
    <experiments>3</experiments>
</comment>
<comment type="interaction">
    <interactant intactId="EBI-11953334">
        <id>P60328</id>
    </interactant>
    <interactant intactId="EBI-1210753">
        <id>Q7Z417</id>
        <label>NUFIP2</label>
    </interactant>
    <organismsDiffer>false</organismsDiffer>
    <experiments>3</experiments>
</comment>
<comment type="interaction">
    <interactant intactId="EBI-11953334">
        <id>P60328</id>
    </interactant>
    <interactant intactId="EBI-740446">
        <id>P32242</id>
        <label>OTX1</label>
    </interactant>
    <organismsDiffer>false</organismsDiffer>
    <experiments>3</experiments>
</comment>
<comment type="interaction">
    <interactant intactId="EBI-11953334">
        <id>P60328</id>
    </interactant>
    <interactant intactId="EBI-12813389">
        <id>Q8TDS5</id>
        <label>OXER1</label>
    </interactant>
    <organismsDiffer>false</organismsDiffer>
    <experiments>3</experiments>
</comment>
<comment type="interaction">
    <interactant intactId="EBI-11953334">
        <id>P60328</id>
    </interactant>
    <interactant intactId="EBI-2828248">
        <id>Q99571</id>
        <label>P2RX4</label>
    </interactant>
    <organismsDiffer>false</organismsDiffer>
    <experiments>3</experiments>
</comment>
<comment type="interaction">
    <interactant intactId="EBI-11953334">
        <id>P60328</id>
    </interactant>
    <interactant intactId="EBI-10235794">
        <id>Q15077</id>
        <label>P2RY6</label>
    </interactant>
    <organismsDiffer>false</organismsDiffer>
    <experiments>3</experiments>
</comment>
<comment type="interaction">
    <interactant intactId="EBI-11953334">
        <id>P60328</id>
    </interactant>
    <interactant intactId="EBI-12149899">
        <id>Q8IVL6-2</id>
        <label>P3H3</label>
    </interactant>
    <organismsDiffer>false</organismsDiffer>
    <experiments>3</experiments>
</comment>
<comment type="interaction">
    <interactant intactId="EBI-11953334">
        <id>P60328</id>
    </interactant>
    <interactant intactId="EBI-395883">
        <id>P07237</id>
        <label>P4HB</label>
    </interactant>
    <organismsDiffer>false</organismsDiffer>
    <experiments>3</experiments>
</comment>
<comment type="interaction">
    <interactant intactId="EBI-11953334">
        <id>P60328</id>
    </interactant>
    <interactant intactId="EBI-11524542">
        <id>O76083-2</id>
        <label>PDE9A</label>
    </interactant>
    <organismsDiffer>false</organismsDiffer>
    <experiments>3</experiments>
</comment>
<comment type="interaction">
    <interactant intactId="EBI-11953334">
        <id>P60328</id>
    </interactant>
    <interactant intactId="EBI-641237">
        <id>P09619</id>
        <label>PDGFRB</label>
    </interactant>
    <organismsDiffer>false</organismsDiffer>
    <experiments>3</experiments>
</comment>
<comment type="interaction">
    <interactant intactId="EBI-11953334">
        <id>P60328</id>
    </interactant>
    <interactant intactId="EBI-10310808">
        <id>Q9HCN3</id>
        <label>PGAP6</label>
    </interactant>
    <organismsDiffer>false</organismsDiffer>
    <experiments>3</experiments>
</comment>
<comment type="interaction">
    <interactant intactId="EBI-11953334">
        <id>P60328</id>
    </interactant>
    <interactant intactId="EBI-14084211">
        <id>A2BDE7</id>
        <label>PHLDA1</label>
    </interactant>
    <organismsDiffer>false</organismsDiffer>
    <experiments>3</experiments>
</comment>
<comment type="interaction">
    <interactant intactId="EBI-11953334">
        <id>P60328</id>
    </interactant>
    <interactant intactId="EBI-17236143">
        <id>Q12837</id>
        <label>POU4F2</label>
    </interactant>
    <organismsDiffer>false</organismsDiffer>
    <experiments>3</experiments>
</comment>
<comment type="interaction">
    <interactant intactId="EBI-11953334">
        <id>P60328</id>
    </interactant>
    <interactant intactId="EBI-948821">
        <id>P41222</id>
        <label>PTGDS</label>
    </interactant>
    <organismsDiffer>false</organismsDiffer>
    <experiments>3</experiments>
</comment>
<comment type="interaction">
    <interactant intactId="EBI-11953334">
        <id>P60328</id>
    </interactant>
    <interactant intactId="EBI-7199479">
        <id>Q8WUK0</id>
        <label>PTPMT1</label>
    </interactant>
    <organismsDiffer>false</organismsDiffer>
    <experiments>3</experiments>
</comment>
<comment type="interaction">
    <interactant intactId="EBI-11953334">
        <id>P60328</id>
    </interactant>
    <interactant intactId="EBI-948428">
        <id>Q9Y2K5</id>
        <label>R3HDM2</label>
    </interactant>
    <organismsDiffer>false</organismsDiffer>
    <experiments>3</experiments>
</comment>
<comment type="interaction">
    <interactant intactId="EBI-11953334">
        <id>P60328</id>
    </interactant>
    <interactant intactId="EBI-12009390">
        <id>Q6UXX9-2</id>
        <label>RSPO2</label>
    </interactant>
    <organismsDiffer>false</organismsDiffer>
    <experiments>3</experiments>
</comment>
<comment type="interaction">
    <interactant intactId="EBI-11953334">
        <id>P60328</id>
    </interactant>
    <interactant intactId="EBI-10277687">
        <id>Q8WWX9</id>
        <label>SELENOM</label>
    </interactant>
    <organismsDiffer>false</organismsDiffer>
    <experiments>3</experiments>
</comment>
<comment type="interaction">
    <interactant intactId="EBI-11953334">
        <id>P60328</id>
    </interactant>
    <interactant intactId="EBI-11955083">
        <id>Q9NUL5-4</id>
        <label>SHFL</label>
    </interactant>
    <organismsDiffer>false</organismsDiffer>
    <experiments>3</experiments>
</comment>
<comment type="interaction">
    <interactant intactId="EBI-11953334">
        <id>P60328</id>
    </interactant>
    <interactant intactId="EBI-12002412">
        <id>Q86YT5</id>
        <label>SLC13A5</label>
    </interactant>
    <organismsDiffer>false</organismsDiffer>
    <experiments>3</experiments>
</comment>
<comment type="interaction">
    <interactant intactId="EBI-11953334">
        <id>P60328</id>
    </interactant>
    <interactant intactId="EBI-12806032">
        <id>Q16348</id>
        <label>SLC15A2</label>
    </interactant>
    <organismsDiffer>false</organismsDiffer>
    <experiments>3</experiments>
</comment>
<comment type="interaction">
    <interactant intactId="EBI-11953334">
        <id>P60328</id>
    </interactant>
    <interactant intactId="EBI-11998660">
        <id>Q9UHI7-3</id>
        <label>SLC23A1</label>
    </interactant>
    <organismsDiffer>false</organismsDiffer>
    <experiments>3</experiments>
</comment>
<comment type="interaction">
    <interactant intactId="EBI-11953334">
        <id>P60328</id>
    </interactant>
    <interactant intactId="EBI-3866665">
        <id>O43609</id>
        <label>SPRY1</label>
    </interactant>
    <organismsDiffer>false</organismsDiffer>
    <experiments>3</experiments>
</comment>
<comment type="interaction">
    <interactant intactId="EBI-11953334">
        <id>P60328</id>
    </interactant>
    <interactant intactId="EBI-710310">
        <id>Q15560</id>
        <label>TCEA2</label>
    </interactant>
    <organismsDiffer>false</organismsDiffer>
    <experiments>3</experiments>
</comment>
<comment type="interaction">
    <interactant intactId="EBI-11953334">
        <id>P60328</id>
    </interactant>
    <interactant intactId="EBI-11955057">
        <id>Q8N8B7-2</id>
        <label>TCEANC</label>
    </interactant>
    <organismsDiffer>false</organismsDiffer>
    <experiments>3</experiments>
</comment>
<comment type="interaction">
    <interactant intactId="EBI-11953334">
        <id>P60328</id>
    </interactant>
    <interactant intactId="EBI-11952651">
        <id>Q7Z6R9</id>
        <label>TFAP2D</label>
    </interactant>
    <organismsDiffer>false</organismsDiffer>
    <experiments>3</experiments>
</comment>
<comment type="interaction">
    <interactant intactId="EBI-11953334">
        <id>P60328</id>
    </interactant>
    <interactant intactId="EBI-12039775">
        <id>Q05952</id>
        <label>TNP2</label>
    </interactant>
    <organismsDiffer>false</organismsDiffer>
    <experiments>3</experiments>
</comment>
<comment type="interaction">
    <interactant intactId="EBI-11953334">
        <id>P60328</id>
    </interactant>
    <interactant intactId="EBI-949753">
        <id>Q63HR2</id>
        <label>TNS2</label>
    </interactant>
    <organismsDiffer>false</organismsDiffer>
    <experiments>3</experiments>
</comment>
<comment type="interaction">
    <interactant intactId="EBI-11953334">
        <id>P60328</id>
    </interactant>
    <interactant intactId="EBI-10210710">
        <id>P49638</id>
        <label>TTPA</label>
    </interactant>
    <organismsDiffer>false</organismsDiffer>
    <experiments>3</experiments>
</comment>
<comment type="interaction">
    <interactant intactId="EBI-11953334">
        <id>P60328</id>
    </interactant>
    <interactant intactId="EBI-5457544">
        <id>Q9BRU9</id>
        <label>UTP23</label>
    </interactant>
    <organismsDiffer>false</organismsDiffer>
    <experiments>3</experiments>
</comment>
<comment type="interaction">
    <interactant intactId="EBI-11953334">
        <id>P60328</id>
    </interactant>
    <interactant intactId="EBI-357355">
        <id>Q9UBK9</id>
        <label>UXT</label>
    </interactant>
    <organismsDiffer>false</organismsDiffer>
    <experiments>4</experiments>
</comment>
<comment type="interaction">
    <interactant intactId="EBI-11953334">
        <id>P60328</id>
    </interactant>
    <interactant intactId="EBI-10249550">
        <id>Q6EMK4</id>
        <label>VASN</label>
    </interactant>
    <organismsDiffer>false</organismsDiffer>
    <experiments>6</experiments>
</comment>
<comment type="interaction">
    <interactant intactId="EBI-11953334">
        <id>P60328</id>
    </interactant>
    <interactant intactId="EBI-11957216">
        <id>A8MV65-2</id>
        <label>VGLL3</label>
    </interactant>
    <organismsDiffer>false</organismsDiffer>
    <experiments>3</experiments>
</comment>
<comment type="interaction">
    <interactant intactId="EBI-11953334">
        <id>P60328</id>
    </interactant>
    <interactant intactId="EBI-4311759">
        <id>Q8IW00</id>
        <label>VSTM4</label>
    </interactant>
    <organismsDiffer>false</organismsDiffer>
    <experiments>3</experiments>
</comment>
<comment type="interaction">
    <interactant intactId="EBI-11953334">
        <id>P60328</id>
    </interactant>
    <interactant intactId="EBI-12032042">
        <id>Q64LD2-2</id>
        <label>WDR25</label>
    </interactant>
    <organismsDiffer>false</organismsDiffer>
    <experiments>3</experiments>
</comment>
<comment type="interaction">
    <interactant intactId="EBI-11953334">
        <id>P60328</id>
    </interactant>
    <interactant intactId="EBI-8058160">
        <id>O96014</id>
        <label>WNT11</label>
    </interactant>
    <organismsDiffer>false</organismsDiffer>
    <experiments>3</experiments>
</comment>
<comment type="interaction">
    <interactant intactId="EBI-11953334">
        <id>P60328</id>
    </interactant>
    <interactant intactId="EBI-765538">
        <id>P25490</id>
        <label>YY1</label>
    </interactant>
    <organismsDiffer>false</organismsDiffer>
    <experiments>3</experiments>
</comment>
<comment type="interaction">
    <interactant intactId="EBI-11953334">
        <id>P60328</id>
    </interactant>
    <interactant intactId="EBI-2818796">
        <id>Q8WTX9</id>
        <label>ZDHHC1</label>
    </interactant>
    <organismsDiffer>false</organismsDiffer>
    <experiments>3</experiments>
</comment>
<comment type="interaction">
    <interactant intactId="EBI-11953334">
        <id>P60328</id>
    </interactant>
    <interactant intactId="EBI-5278328">
        <id>Q8IZC7</id>
        <label>ZNF101</label>
    </interactant>
    <organismsDiffer>false</organismsDiffer>
    <experiments>3</experiments>
</comment>
<comment type="interaction">
    <interactant intactId="EBI-11953334">
        <id>P60328</id>
    </interactant>
    <interactant intactId="EBI-2555767">
        <id>Q15973</id>
        <label>ZNF124</label>
    </interactant>
    <organismsDiffer>false</organismsDiffer>
    <experiments>3</experiments>
</comment>
<comment type="interaction">
    <interactant intactId="EBI-11953334">
        <id>P60328</id>
    </interactant>
    <interactant intactId="EBI-10746567">
        <id>P52744</id>
        <label>ZNF138</label>
    </interactant>
    <organismsDiffer>false</organismsDiffer>
    <experiments>3</experiments>
</comment>
<comment type="interaction">
    <interactant intactId="EBI-11953334">
        <id>P60328</id>
    </interactant>
    <interactant intactId="EBI-717634">
        <id>P17024</id>
        <label>ZNF20</label>
    </interactant>
    <organismsDiffer>false</organismsDiffer>
    <experiments>3</experiments>
</comment>
<comment type="interaction">
    <interactant intactId="EBI-11953334">
        <id>P60328</id>
    </interactant>
    <interactant intactId="EBI-347633">
        <id>Q9H9D4</id>
        <label>ZNF408</label>
    </interactant>
    <organismsDiffer>false</organismsDiffer>
    <experiments>3</experiments>
</comment>
<comment type="interaction">
    <interactant intactId="EBI-11953334">
        <id>P60328</id>
    </interactant>
    <interactant intactId="EBI-740727">
        <id>Q8TAU3</id>
        <label>ZNF417</label>
    </interactant>
    <organismsDiffer>false</organismsDiffer>
    <experiments>3</experiments>
</comment>
<comment type="interaction">
    <interactant intactId="EBI-11953334">
        <id>P60328</id>
    </interactant>
    <interactant intactId="EBI-747580">
        <id>Q8NDP4</id>
        <label>ZNF439</label>
    </interactant>
    <organismsDiffer>false</organismsDiffer>
    <experiments>3</experiments>
</comment>
<comment type="interaction">
    <interactant intactId="EBI-11953334">
        <id>P60328</id>
    </interactant>
    <interactant intactId="EBI-726439">
        <id>Q8IYI8</id>
        <label>ZNF440</label>
    </interactant>
    <organismsDiffer>false</organismsDiffer>
    <experiments>3</experiments>
</comment>
<comment type="interaction">
    <interactant intactId="EBI-11953334">
        <id>P60328</id>
    </interactant>
    <interactant intactId="EBI-11986485">
        <id>Q7Z7K2</id>
        <label>ZNF467</label>
    </interactant>
    <organismsDiffer>false</organismsDiffer>
    <experiments>3</experiments>
</comment>
<comment type="interaction">
    <interactant intactId="EBI-11953334">
        <id>P60328</id>
    </interactant>
    <interactant intactId="EBI-1105370">
        <id>Q9ULM2</id>
        <label>ZNF490</label>
    </interactant>
    <organismsDiffer>false</organismsDiffer>
    <experiments>3</experiments>
</comment>
<comment type="interaction">
    <interactant intactId="EBI-11953334">
        <id>P60328</id>
    </interactant>
    <interactant intactId="EBI-12019860">
        <id>Q8N8L2</id>
        <label>ZNF491</label>
    </interactant>
    <organismsDiffer>false</organismsDiffer>
    <experiments>3</experiments>
</comment>
<comment type="interaction">
    <interactant intactId="EBI-11953334">
        <id>P60328</id>
    </interactant>
    <interactant intactId="EBI-10486136">
        <id>Q6ZNH5</id>
        <label>ZNF497</label>
    </interactant>
    <organismsDiffer>false</organismsDiffer>
    <experiments>3</experiments>
</comment>
<comment type="interaction">
    <interactant intactId="EBI-11953334">
        <id>P60328</id>
    </interactant>
    <interactant intactId="EBI-11955189">
        <id>Q96N58</id>
        <label>ZNF578</label>
    </interactant>
    <organismsDiffer>false</organismsDiffer>
    <experiments>3</experiments>
</comment>
<comment type="interaction">
    <interactant intactId="EBI-11953334">
        <id>P60328</id>
    </interactant>
    <interactant intactId="EBI-6427977">
        <id>Q96SQ5</id>
        <label>ZNF587</label>
    </interactant>
    <organismsDiffer>false</organismsDiffer>
    <experiments>3</experiments>
</comment>
<comment type="interaction">
    <interactant intactId="EBI-11953334">
        <id>P60328</id>
    </interactant>
    <interactant intactId="EBI-11985915">
        <id>Q5T619</id>
        <label>ZNF648</label>
    </interactant>
    <organismsDiffer>false</organismsDiffer>
    <experiments>3</experiments>
</comment>
<comment type="interaction">
    <interactant intactId="EBI-11953334">
        <id>P60328</id>
    </interactant>
    <interactant intactId="EBI-11090299">
        <id>Q9H7X3</id>
        <label>ZNF696</label>
    </interactant>
    <organismsDiffer>false</organismsDiffer>
    <experiments>3</experiments>
</comment>
<comment type="interaction">
    <interactant intactId="EBI-11953334">
        <id>P60328</id>
    </interactant>
    <interactant intactId="EBI-12013828">
        <id>P51504</id>
        <label>ZNF80</label>
    </interactant>
    <organismsDiffer>false</organismsDiffer>
    <experiments>3</experiments>
</comment>
<comment type="interaction">
    <interactant intactId="EBI-11953334">
        <id>P60328</id>
    </interactant>
    <interactant intactId="EBI-5667516">
        <id>Q9Y2P0</id>
        <label>ZNF835</label>
    </interactant>
    <organismsDiffer>false</organismsDiffer>
    <experiments>3</experiments>
</comment>
<comment type="interaction">
    <interactant intactId="EBI-11953334">
        <id>P60328</id>
    </interactant>
    <interactant intactId="EBI-11962574">
        <id>Q96EG3</id>
        <label>ZNF837</label>
    </interactant>
    <organismsDiffer>false</organismsDiffer>
    <experiments>3</experiments>
</comment>
<comment type="interaction">
    <interactant intactId="EBI-11953334">
        <id>P60328</id>
    </interactant>
    <interactant intactId="EBI-10281938">
        <id>Q9Y5A6</id>
        <label>ZSCAN21</label>
    </interactant>
    <organismsDiffer>false</organismsDiffer>
    <experiments>3</experiments>
</comment>
<comment type="tissue specificity">
    <text evidence="1 2">Restricted to a narrow region of the hair fiber cuticle, lying approximately 20 cell layers above the apex of the dermal papilla of the hair root; not detected in any other tissues.</text>
</comment>
<comment type="similarity">
    <text evidence="3">Belongs to the KRTAP type 12 family.</text>
</comment>
<accession>P60328</accession>
<protein>
    <recommendedName>
        <fullName>Keratin-associated protein 12-3</fullName>
    </recommendedName>
    <alternativeName>
        <fullName>High sulfur keratin-associated protein 12.3</fullName>
    </alternativeName>
    <alternativeName>
        <fullName>Keratin-associated protein 12.3</fullName>
    </alternativeName>
</protein>
<organism>
    <name type="scientific">Homo sapiens</name>
    <name type="common">Human</name>
    <dbReference type="NCBI Taxonomy" id="9606"/>
    <lineage>
        <taxon>Eukaryota</taxon>
        <taxon>Metazoa</taxon>
        <taxon>Chordata</taxon>
        <taxon>Craniata</taxon>
        <taxon>Vertebrata</taxon>
        <taxon>Euteleostomi</taxon>
        <taxon>Mammalia</taxon>
        <taxon>Eutheria</taxon>
        <taxon>Euarchontoglires</taxon>
        <taxon>Primates</taxon>
        <taxon>Haplorrhini</taxon>
        <taxon>Catarrhini</taxon>
        <taxon>Hominidae</taxon>
        <taxon>Homo</taxon>
    </lineage>
</organism>
<sequence length="96" mass="9947">MCHTSCSPACQPTCCIHSPCQASCYVPVSCQSSVCMPVSCTRIVCVAPSCQPSVCVPVSCRPIIYVTPSCQSSGCCQPPCTTALCRPISCSTPSCC</sequence>
<gene>
    <name type="primary">KRTAP12-3</name>
    <name type="synonym">KAP12.3</name>
    <name type="synonym">KRTAP12.3</name>
</gene>
<keyword id="KW-0416">Keratin</keyword>
<keyword id="KW-1267">Proteomics identification</keyword>
<keyword id="KW-1185">Reference proteome</keyword>
<keyword id="KW-0677">Repeat</keyword>
<feature type="chain" id="PRO_0000185198" description="Keratin-associated protein 12-3">
    <location>
        <begin position="1"/>
        <end position="96"/>
    </location>
</feature>
<feature type="repeat" description="1">
    <location>
        <begin position="10"/>
        <end position="14"/>
    </location>
</feature>
<feature type="repeat" description="2">
    <location>
        <begin position="15"/>
        <end position="19"/>
    </location>
</feature>
<feature type="repeat" description="3">
    <location>
        <begin position="24"/>
        <end position="28"/>
    </location>
</feature>
<feature type="repeat" description="4">
    <location>
        <begin position="30"/>
        <end position="34"/>
    </location>
</feature>
<feature type="repeat" description="5">
    <location>
        <begin position="35"/>
        <end position="39"/>
    </location>
</feature>
<feature type="repeat" description="6">
    <location>
        <begin position="45"/>
        <end position="49"/>
    </location>
</feature>
<feature type="repeat" description="7">
    <location>
        <begin position="50"/>
        <end position="54"/>
    </location>
</feature>
<feature type="repeat" description="8">
    <location>
        <begin position="55"/>
        <end position="59"/>
    </location>
</feature>
<feature type="repeat" description="9">
    <location>
        <begin position="60"/>
        <end position="64"/>
    </location>
</feature>
<feature type="repeat" description="10">
    <location>
        <begin position="70"/>
        <end position="74"/>
    </location>
</feature>
<feature type="repeat" description="11">
    <location>
        <begin position="75"/>
        <end position="79"/>
    </location>
</feature>
<feature type="repeat" description="12">
    <location>
        <begin position="80"/>
        <end position="84"/>
    </location>
</feature>
<feature type="repeat" description="13">
    <location>
        <begin position="85"/>
        <end position="89"/>
    </location>
</feature>
<feature type="repeat" description="14">
    <location>
        <begin position="90"/>
        <end position="94"/>
    </location>
</feature>
<feature type="region of interest" description="14 X 5 AA approximate repeats">
    <location>
        <begin position="10"/>
        <end position="94"/>
    </location>
</feature>
<feature type="sequence variant" id="VAR_017592" description="In dbSNP:rs9306111." evidence="2">
    <original>H</original>
    <variation>R</variation>
    <location>
        <position position="17"/>
    </location>
</feature>
<name>KR123_HUMAN</name>
<proteinExistence type="evidence at protein level"/>
<reference key="1">
    <citation type="journal article" date="2004" name="Genomics">
        <title>A cluster of 21 keratin-associated protein genes within introns of another gene on human chromosome 21q22.3.</title>
        <authorList>
            <person name="Shibuya K."/>
            <person name="Obayashi I."/>
            <person name="Asakawa S."/>
            <person name="Minoshima S."/>
            <person name="Kudoh J."/>
            <person name="Shimizu N."/>
        </authorList>
    </citation>
    <scope>NUCLEOTIDE SEQUENCE [MRNA]</scope>
    <scope>TISSUE SPECIFICITY</scope>
    <scope>VARIANT ARG-17</scope>
    <source>
        <tissue>Hair root</tissue>
    </source>
</reference>
<reference key="2">
    <citation type="journal article" date="2000" name="Nature">
        <title>The DNA sequence of human chromosome 21.</title>
        <authorList>
            <person name="Hattori M."/>
            <person name="Fujiyama A."/>
            <person name="Taylor T.D."/>
            <person name="Watanabe H."/>
            <person name="Yada T."/>
            <person name="Park H.-S."/>
            <person name="Toyoda A."/>
            <person name="Ishii K."/>
            <person name="Totoki Y."/>
            <person name="Choi D.-K."/>
            <person name="Groner Y."/>
            <person name="Soeda E."/>
            <person name="Ohki M."/>
            <person name="Takagi T."/>
            <person name="Sakaki Y."/>
            <person name="Taudien S."/>
            <person name="Blechschmidt K."/>
            <person name="Polley A."/>
            <person name="Menzel U."/>
            <person name="Delabar J."/>
            <person name="Kumpf K."/>
            <person name="Lehmann R."/>
            <person name="Patterson D."/>
            <person name="Reichwald K."/>
            <person name="Rump A."/>
            <person name="Schillhabel M."/>
            <person name="Schudy A."/>
            <person name="Zimmermann W."/>
            <person name="Rosenthal A."/>
            <person name="Kudoh J."/>
            <person name="Shibuya K."/>
            <person name="Kawasaki K."/>
            <person name="Asakawa S."/>
            <person name="Shintani A."/>
            <person name="Sasaki T."/>
            <person name="Nagamine K."/>
            <person name="Mitsuyama S."/>
            <person name="Antonarakis S.E."/>
            <person name="Minoshima S."/>
            <person name="Shimizu N."/>
            <person name="Nordsiek G."/>
            <person name="Hornischer K."/>
            <person name="Brandt P."/>
            <person name="Scharfe M."/>
            <person name="Schoen O."/>
            <person name="Desario A."/>
            <person name="Reichelt J."/>
            <person name="Kauer G."/>
            <person name="Bloecker H."/>
            <person name="Ramser J."/>
            <person name="Beck A."/>
            <person name="Klages S."/>
            <person name="Hennig S."/>
            <person name="Riesselmann L."/>
            <person name="Dagand E."/>
            <person name="Wehrmeyer S."/>
            <person name="Borzym K."/>
            <person name="Gardiner K."/>
            <person name="Nizetic D."/>
            <person name="Francis F."/>
            <person name="Lehrach H."/>
            <person name="Reinhardt R."/>
            <person name="Yaspo M.-L."/>
        </authorList>
    </citation>
    <scope>NUCLEOTIDE SEQUENCE [LARGE SCALE GENOMIC DNA]</scope>
</reference>
<reference key="3">
    <citation type="journal article" date="2004" name="J. Invest. Dermatol.">
        <title>Hair keratin associated proteins: characterization of a second high sulfur KAP gene domain on human chromosome 21.</title>
        <authorList>
            <person name="Rogers M.A."/>
            <person name="Langbein L."/>
            <person name="Winter H."/>
            <person name="Beckmann I."/>
            <person name="Praetzel S."/>
            <person name="Schweizer J."/>
        </authorList>
    </citation>
    <scope>TISSUE SPECIFICITY</scope>
</reference>
<dbReference type="EMBL" id="AB076361">
    <property type="protein sequence ID" value="BAD01548.1"/>
    <property type="molecule type" value="mRNA"/>
</dbReference>
<dbReference type="EMBL" id="AL773602">
    <property type="status" value="NOT_ANNOTATED_CDS"/>
    <property type="molecule type" value="Genomic_DNA"/>
</dbReference>
<dbReference type="CCDS" id="CCDS42964.1"/>
<dbReference type="RefSeq" id="NP_941970.2">
    <property type="nucleotide sequence ID" value="NM_198697.2"/>
</dbReference>
<dbReference type="BioGRID" id="132134">
    <property type="interactions" value="146"/>
</dbReference>
<dbReference type="FunCoup" id="P60328">
    <property type="interactions" value="205"/>
</dbReference>
<dbReference type="IntAct" id="P60328">
    <property type="interactions" value="138"/>
</dbReference>
<dbReference type="STRING" id="9606.ENSP00000381005"/>
<dbReference type="GlyGen" id="P60328">
    <property type="glycosylation" value="1 site"/>
</dbReference>
<dbReference type="BioMuta" id="KRTAP12-3"/>
<dbReference type="DMDM" id="296434553"/>
<dbReference type="MassIVE" id="P60328"/>
<dbReference type="PaxDb" id="9606-ENSP00000381005"/>
<dbReference type="PeptideAtlas" id="P60328"/>
<dbReference type="DNASU" id="386683"/>
<dbReference type="Ensembl" id="ENST00000397907.1">
    <property type="protein sequence ID" value="ENSP00000381005.1"/>
    <property type="gene ID" value="ENSG00000205439.10"/>
</dbReference>
<dbReference type="GeneID" id="386683"/>
<dbReference type="KEGG" id="hsa:386683"/>
<dbReference type="MANE-Select" id="ENST00000397907.1">
    <property type="protein sequence ID" value="ENSP00000381005.1"/>
    <property type="RefSeq nucleotide sequence ID" value="NM_198697.2"/>
    <property type="RefSeq protein sequence ID" value="NP_941970.2"/>
</dbReference>
<dbReference type="UCSC" id="uc002zft.3">
    <property type="organism name" value="human"/>
</dbReference>
<dbReference type="AGR" id="HGNC:20531"/>
<dbReference type="CTD" id="386683"/>
<dbReference type="GeneCards" id="KRTAP12-3"/>
<dbReference type="HGNC" id="HGNC:20531">
    <property type="gene designation" value="KRTAP12-3"/>
</dbReference>
<dbReference type="HPA" id="ENSG00000205439">
    <property type="expression patterns" value="Tissue enriched (skin)"/>
</dbReference>
<dbReference type="neXtProt" id="NX_P60328"/>
<dbReference type="OpenTargets" id="ENSG00000205439"/>
<dbReference type="PharmGKB" id="PA134986807"/>
<dbReference type="VEuPathDB" id="HostDB:ENSG00000205439"/>
<dbReference type="eggNOG" id="KOG4726">
    <property type="taxonomic scope" value="Eukaryota"/>
</dbReference>
<dbReference type="GeneTree" id="ENSGT00940000163527"/>
<dbReference type="HOGENOM" id="CLU_138013_1_0_1"/>
<dbReference type="InParanoid" id="P60328"/>
<dbReference type="OMA" id="SCQSARF"/>
<dbReference type="OrthoDB" id="9482936at2759"/>
<dbReference type="PAN-GO" id="P60328">
    <property type="GO annotations" value="0 GO annotations based on evolutionary models"/>
</dbReference>
<dbReference type="PhylomeDB" id="P60328"/>
<dbReference type="TreeFam" id="TF339135"/>
<dbReference type="PathwayCommons" id="P60328"/>
<dbReference type="Reactome" id="R-HSA-6805567">
    <property type="pathway name" value="Keratinization"/>
</dbReference>
<dbReference type="SignaLink" id="P60328"/>
<dbReference type="BioGRID-ORCS" id="386683">
    <property type="hits" value="3 hits in 1066 CRISPR screens"/>
</dbReference>
<dbReference type="GenomeRNAi" id="386683"/>
<dbReference type="Pharos" id="P60328">
    <property type="development level" value="Tdark"/>
</dbReference>
<dbReference type="PRO" id="PR:P60328"/>
<dbReference type="Proteomes" id="UP000005640">
    <property type="component" value="Chromosome 21"/>
</dbReference>
<dbReference type="RNAct" id="P60328">
    <property type="molecule type" value="protein"/>
</dbReference>
<dbReference type="Bgee" id="ENSG00000205439">
    <property type="expression patterns" value="Expressed in granulocyte and 23 other cell types or tissues"/>
</dbReference>
<dbReference type="GO" id="GO:0005829">
    <property type="term" value="C:cytosol"/>
    <property type="evidence" value="ECO:0000304"/>
    <property type="project" value="Reactome"/>
</dbReference>
<dbReference type="GO" id="GO:0045095">
    <property type="term" value="C:keratin filament"/>
    <property type="evidence" value="ECO:0007669"/>
    <property type="project" value="InterPro"/>
</dbReference>
<dbReference type="GO" id="GO:0042802">
    <property type="term" value="F:identical protein binding"/>
    <property type="evidence" value="ECO:0000353"/>
    <property type="project" value="IntAct"/>
</dbReference>
<dbReference type="InterPro" id="IPR002494">
    <property type="entry name" value="KAP"/>
</dbReference>
<dbReference type="Pfam" id="PF13885">
    <property type="entry name" value="Keratin_B2_2"/>
    <property type="match status" value="1"/>
</dbReference>
<evidence type="ECO:0000269" key="1">
    <source>
    </source>
</evidence>
<evidence type="ECO:0000269" key="2">
    <source>
    </source>
</evidence>
<evidence type="ECO:0000305" key="3"/>